<keyword id="KW-0963">Cytoplasm</keyword>
<keyword id="KW-0238">DNA-binding</keyword>
<keyword id="KW-1185">Reference proteome</keyword>
<keyword id="KW-0804">Transcription</keyword>
<keyword id="KW-0805">Transcription regulation</keyword>
<evidence type="ECO:0000255" key="1">
    <source>
        <dbReference type="HAMAP-Rule" id="MF_00693"/>
    </source>
</evidence>
<proteinExistence type="inferred from homology"/>
<dbReference type="EMBL" id="CP000270">
    <property type="protein sequence ID" value="ABE29723.1"/>
    <property type="molecule type" value="Genomic_DNA"/>
</dbReference>
<dbReference type="RefSeq" id="WP_011487456.1">
    <property type="nucleotide sequence ID" value="NC_007951.1"/>
</dbReference>
<dbReference type="SMR" id="Q142L6"/>
<dbReference type="STRING" id="266265.Bxe_A3259"/>
<dbReference type="KEGG" id="bxb:DR64_961"/>
<dbReference type="KEGG" id="bxe:Bxe_A3259"/>
<dbReference type="PATRIC" id="fig|266265.5.peg.1221"/>
<dbReference type="eggNOG" id="COG0217">
    <property type="taxonomic scope" value="Bacteria"/>
</dbReference>
<dbReference type="OrthoDB" id="9781053at2"/>
<dbReference type="Proteomes" id="UP000001817">
    <property type="component" value="Chromosome 1"/>
</dbReference>
<dbReference type="GO" id="GO:0005829">
    <property type="term" value="C:cytosol"/>
    <property type="evidence" value="ECO:0007669"/>
    <property type="project" value="TreeGrafter"/>
</dbReference>
<dbReference type="GO" id="GO:0003677">
    <property type="term" value="F:DNA binding"/>
    <property type="evidence" value="ECO:0007669"/>
    <property type="project" value="UniProtKB-UniRule"/>
</dbReference>
<dbReference type="GO" id="GO:0006355">
    <property type="term" value="P:regulation of DNA-templated transcription"/>
    <property type="evidence" value="ECO:0007669"/>
    <property type="project" value="UniProtKB-UniRule"/>
</dbReference>
<dbReference type="FunFam" id="1.10.10.200:FF:000001">
    <property type="entry name" value="Probable transcriptional regulatory protein YebC"/>
    <property type="match status" value="1"/>
</dbReference>
<dbReference type="FunFam" id="3.30.70.980:FF:000002">
    <property type="entry name" value="Probable transcriptional regulatory protein YebC"/>
    <property type="match status" value="1"/>
</dbReference>
<dbReference type="Gene3D" id="1.10.10.200">
    <property type="match status" value="1"/>
</dbReference>
<dbReference type="Gene3D" id="3.30.70.980">
    <property type="match status" value="2"/>
</dbReference>
<dbReference type="HAMAP" id="MF_00693">
    <property type="entry name" value="Transcrip_reg_TACO1"/>
    <property type="match status" value="1"/>
</dbReference>
<dbReference type="InterPro" id="IPR017856">
    <property type="entry name" value="Integrase-like_N"/>
</dbReference>
<dbReference type="InterPro" id="IPR048300">
    <property type="entry name" value="TACO1_YebC-like_2nd/3rd_dom"/>
</dbReference>
<dbReference type="InterPro" id="IPR049083">
    <property type="entry name" value="TACO1_YebC_N"/>
</dbReference>
<dbReference type="InterPro" id="IPR002876">
    <property type="entry name" value="Transcrip_reg_TACO1-like"/>
</dbReference>
<dbReference type="InterPro" id="IPR026564">
    <property type="entry name" value="Transcrip_reg_TACO1-like_dom3"/>
</dbReference>
<dbReference type="InterPro" id="IPR029072">
    <property type="entry name" value="YebC-like"/>
</dbReference>
<dbReference type="NCBIfam" id="NF001030">
    <property type="entry name" value="PRK00110.1"/>
    <property type="match status" value="1"/>
</dbReference>
<dbReference type="NCBIfam" id="NF009044">
    <property type="entry name" value="PRK12378.1"/>
    <property type="match status" value="1"/>
</dbReference>
<dbReference type="NCBIfam" id="TIGR01033">
    <property type="entry name" value="YebC/PmpR family DNA-binding transcriptional regulator"/>
    <property type="match status" value="1"/>
</dbReference>
<dbReference type="PANTHER" id="PTHR12532:SF6">
    <property type="entry name" value="TRANSCRIPTIONAL REGULATORY PROTEIN YEBC-RELATED"/>
    <property type="match status" value="1"/>
</dbReference>
<dbReference type="PANTHER" id="PTHR12532">
    <property type="entry name" value="TRANSLATIONAL ACTIVATOR OF CYTOCHROME C OXIDASE 1"/>
    <property type="match status" value="1"/>
</dbReference>
<dbReference type="Pfam" id="PF20772">
    <property type="entry name" value="TACO1_YebC_N"/>
    <property type="match status" value="1"/>
</dbReference>
<dbReference type="Pfam" id="PF01709">
    <property type="entry name" value="Transcrip_reg"/>
    <property type="match status" value="1"/>
</dbReference>
<dbReference type="SUPFAM" id="SSF75625">
    <property type="entry name" value="YebC-like"/>
    <property type="match status" value="1"/>
</dbReference>
<feature type="chain" id="PRO_0000257040" description="Probable transcriptional regulatory protein Bxeno_A1185">
    <location>
        <begin position="1"/>
        <end position="242"/>
    </location>
</feature>
<organism>
    <name type="scientific">Paraburkholderia xenovorans (strain LB400)</name>
    <dbReference type="NCBI Taxonomy" id="266265"/>
    <lineage>
        <taxon>Bacteria</taxon>
        <taxon>Pseudomonadati</taxon>
        <taxon>Pseudomonadota</taxon>
        <taxon>Betaproteobacteria</taxon>
        <taxon>Burkholderiales</taxon>
        <taxon>Burkholderiaceae</taxon>
        <taxon>Paraburkholderia</taxon>
    </lineage>
</organism>
<comment type="subcellular location">
    <subcellularLocation>
        <location evidence="1">Cytoplasm</location>
    </subcellularLocation>
</comment>
<comment type="similarity">
    <text evidence="1">Belongs to the TACO1 family.</text>
</comment>
<accession>Q142L6</accession>
<sequence length="242" mass="26107">MAGHSKWANIKHKKAAADAKRGKVWTRLIKEIQVAARMGGGDIDSNPRLRLAVEKAYDANMPKDNVNRAIQRGVGGVDGASYEEIRYEGYGIGGAAVIVDTMTDNRTRTVAEVRHAFSKNGGNMGTDGSVSFMFDHVGQFLFAPGTPEDKLMEAALEAGAEDVVTNDDGSIEVLCPPNDFPKVKSALEAAGFKAELAEVTMKPQTEVEFTGEDAVKMQKLLDALENLDDVQEVYTNAAIAEE</sequence>
<name>Y1185_PARXL</name>
<protein>
    <recommendedName>
        <fullName evidence="1">Probable transcriptional regulatory protein Bxeno_A1185</fullName>
    </recommendedName>
</protein>
<gene>
    <name type="ordered locus">Bxeno_A1185</name>
    <name type="ORF">Bxe_A3259</name>
</gene>
<reference key="1">
    <citation type="journal article" date="2006" name="Proc. Natl. Acad. Sci. U.S.A.">
        <title>Burkholderia xenovorans LB400 harbors a multi-replicon, 9.73-Mbp genome shaped for versatility.</title>
        <authorList>
            <person name="Chain P.S.G."/>
            <person name="Denef V.J."/>
            <person name="Konstantinidis K.T."/>
            <person name="Vergez L.M."/>
            <person name="Agullo L."/>
            <person name="Reyes V.L."/>
            <person name="Hauser L."/>
            <person name="Cordova M."/>
            <person name="Gomez L."/>
            <person name="Gonzalez M."/>
            <person name="Land M."/>
            <person name="Lao V."/>
            <person name="Larimer F."/>
            <person name="LiPuma J.J."/>
            <person name="Mahenthiralingam E."/>
            <person name="Malfatti S.A."/>
            <person name="Marx C.J."/>
            <person name="Parnell J.J."/>
            <person name="Ramette A."/>
            <person name="Richardson P."/>
            <person name="Seeger M."/>
            <person name="Smith D."/>
            <person name="Spilker T."/>
            <person name="Sul W.J."/>
            <person name="Tsoi T.V."/>
            <person name="Ulrich L.E."/>
            <person name="Zhulin I.B."/>
            <person name="Tiedje J.M."/>
        </authorList>
    </citation>
    <scope>NUCLEOTIDE SEQUENCE [LARGE SCALE GENOMIC DNA]</scope>
    <source>
        <strain>LB400</strain>
    </source>
</reference>